<protein>
    <recommendedName>
        <fullName>Per os infectivity factor 6</fullName>
        <shortName>PIF6</shortName>
    </recommendedName>
</protein>
<reference key="1">
    <citation type="journal article" date="1994" name="Virology">
        <title>The complete DNA sequence of Autographa californica nuclear polyhedrosis virus.</title>
        <authorList>
            <person name="Ayres M.D."/>
            <person name="Howard S.C."/>
            <person name="Kuzio J."/>
            <person name="Lopez-Ferber M."/>
            <person name="Possee R.D."/>
        </authorList>
    </citation>
    <scope>NUCLEOTIDE SEQUENCE [LARGE SCALE GENOMIC DNA]</scope>
    <source>
        <strain>C6</strain>
    </source>
</reference>
<reference key="2">
    <citation type="journal article" date="2012" name="J. Virol.">
        <title>Analysis of the autographa californica multiple nucleopolyhedrovirus overlapping gene pair lef3 and ac68 reveals that AC68 is a per os infectivity factor and that LEF3 is critical, but not essential, for virus replication.</title>
        <authorList>
            <person name="Nie Y."/>
            <person name="Fang M."/>
            <person name="Erlandson M.A."/>
            <person name="Theilmann D.A."/>
        </authorList>
    </citation>
    <scope>FUNCTION</scope>
    <scope>SUBCELLULAR LOCATION</scope>
</reference>
<feature type="chain" id="PRO_0000133006" description="Per os infectivity factor 6">
    <location>
        <begin position="1"/>
        <end position="192"/>
    </location>
</feature>
<feature type="transmembrane region" description="Helical" evidence="1">
    <location>
        <begin position="154"/>
        <end position="174"/>
    </location>
</feature>
<evidence type="ECO:0000255" key="1"/>
<evidence type="ECO:0000269" key="2">
    <source>
    </source>
</evidence>
<proteinExistence type="inferred from homology"/>
<sequence length="192" mass="22334">MVFIIDTQRHFAHQFTTNPFVIFSNLLGATGHSHAFYKRLTATFSRQRSFGRHIAVVDMWESIRWQILNGDEIEVSPEHRSLAWRELIINVASNTPLDNTFRTMFQKADFENFDYNTPIVYNLKTKTLTMYNERIRAALNRPVRFNDQTVNVNIAYVFLFFICIVLLSVLAVFFDTNIATDTKSKNVAAKIK</sequence>
<accession>P41468</accession>
<dbReference type="EMBL" id="L22858">
    <property type="protein sequence ID" value="AAA66698.1"/>
    <property type="molecule type" value="Genomic_DNA"/>
</dbReference>
<dbReference type="PIR" id="E72858">
    <property type="entry name" value="E72858"/>
</dbReference>
<dbReference type="KEGG" id="vg:1403901"/>
<dbReference type="OrthoDB" id="18095at10239"/>
<dbReference type="Proteomes" id="UP000008292">
    <property type="component" value="Segment"/>
</dbReference>
<dbReference type="GO" id="GO:0030430">
    <property type="term" value="C:host cell cytoplasm"/>
    <property type="evidence" value="ECO:0007669"/>
    <property type="project" value="UniProtKB-SubCell"/>
</dbReference>
<dbReference type="GO" id="GO:0033644">
    <property type="term" value="C:host cell membrane"/>
    <property type="evidence" value="ECO:0007669"/>
    <property type="project" value="UniProtKB-SubCell"/>
</dbReference>
<dbReference type="GO" id="GO:0042025">
    <property type="term" value="C:host cell nucleus"/>
    <property type="evidence" value="ECO:0007669"/>
    <property type="project" value="UniProtKB-SubCell"/>
</dbReference>
<dbReference type="GO" id="GO:0016020">
    <property type="term" value="C:membrane"/>
    <property type="evidence" value="ECO:0007669"/>
    <property type="project" value="UniProtKB-KW"/>
</dbReference>
<dbReference type="GO" id="GO:0044423">
    <property type="term" value="C:virion component"/>
    <property type="evidence" value="ECO:0007669"/>
    <property type="project" value="UniProtKB-KW"/>
</dbReference>
<dbReference type="InterPro" id="IPR008005">
    <property type="entry name" value="PIF6"/>
</dbReference>
<dbReference type="Pfam" id="PF05341">
    <property type="entry name" value="PIF6"/>
    <property type="match status" value="1"/>
</dbReference>
<organism>
    <name type="scientific">Autographa californica nuclear polyhedrosis virus</name>
    <name type="common">AcMNPV</name>
    <dbReference type="NCBI Taxonomy" id="46015"/>
    <lineage>
        <taxon>Viruses</taxon>
        <taxon>Viruses incertae sedis</taxon>
        <taxon>Naldaviricetes</taxon>
        <taxon>Lefavirales</taxon>
        <taxon>Baculoviridae</taxon>
        <taxon>Alphabaculovirus</taxon>
        <taxon>Alphabaculovirus aucalifornicae</taxon>
    </lineage>
</organism>
<gene>
    <name type="primary">AC68</name>
    <name type="ORF">ORF68</name>
</gene>
<name>PIF6_NPVAC</name>
<organismHost>
    <name type="scientific">Lepidoptera</name>
    <name type="common">butterflies and moths</name>
    <dbReference type="NCBI Taxonomy" id="7088"/>
</organismHost>
<comment type="function">
    <text evidence="2">Per os infectivity factor.</text>
</comment>
<comment type="subcellular location">
    <subcellularLocation>
        <location evidence="1">Host membrane</location>
        <topology evidence="1">Single-pass membrane protein</topology>
    </subcellularLocation>
    <subcellularLocation>
        <location evidence="2">Virion</location>
    </subcellularLocation>
    <subcellularLocation>
        <location evidence="2">Host cytoplasm</location>
    </subcellularLocation>
    <subcellularLocation>
        <location evidence="2">Host nucleus</location>
    </subcellularLocation>
    <text evidence="2">Present in both the budded virus (BV) and the occluded-derived virus (ODV).</text>
</comment>
<keyword id="KW-1035">Host cytoplasm</keyword>
<keyword id="KW-1043">Host membrane</keyword>
<keyword id="KW-1048">Host nucleus</keyword>
<keyword id="KW-0472">Membrane</keyword>
<keyword id="KW-1185">Reference proteome</keyword>
<keyword id="KW-0812">Transmembrane</keyword>
<keyword id="KW-1133">Transmembrane helix</keyword>
<keyword id="KW-0946">Virion</keyword>